<gene>
    <name type="primary">MTC2</name>
    <name type="ordered locus">CAGL0F07623g</name>
</gene>
<feature type="chain" id="PRO_0000407761" description="Maintenance of telomere capping protein 2">
    <location>
        <begin position="1"/>
        <end position="418"/>
    </location>
</feature>
<proteinExistence type="inferred from homology"/>
<evidence type="ECO:0000250" key="1"/>
<evidence type="ECO:0000305" key="2"/>
<sequence>MTEMDFDLEQIQKYELPDFETALLFSIVAKKNFLVLFDAEQRKLNDEISNEELIQKSVGDVMQKRTDFKINFKYQCINHVTDEMISEIQKCELDDYKNLETMEHVDEKGDRSANIAGVDQNVTIEFYLVEDIDRQSLADYYQLGRLMREGYIFNVQHNGIANNKKYWKLFIGTVAWKRDEYIIPDDILQLGAADKKYSHKHGQSFKLKSFSTGFEDWIRHKFWLVTTLAMPNIKPTIEVQAADDTASFSSVVITKDEAKEEEAITGSSDGAEKIISGDYKNYDNIHIQASLRRYILDIMVHIRTHRLTFNARGGGIHKNCYSNMITLSKIICIKDHKSFVVPQHVRLAAMWFLPLQLSVIDDSLKDNSILYGSKPELVRELMKRVVYVRNKQIIDMDNPLFMEALIVKSALKKIVPPV</sequence>
<organism>
    <name type="scientific">Candida glabrata (strain ATCC 2001 / BCRC 20586 / JCM 3761 / NBRC 0622 / NRRL Y-65 / CBS 138)</name>
    <name type="common">Yeast</name>
    <name type="synonym">Nakaseomyces glabratus</name>
    <dbReference type="NCBI Taxonomy" id="284593"/>
    <lineage>
        <taxon>Eukaryota</taxon>
        <taxon>Fungi</taxon>
        <taxon>Dikarya</taxon>
        <taxon>Ascomycota</taxon>
        <taxon>Saccharomycotina</taxon>
        <taxon>Saccharomycetes</taxon>
        <taxon>Saccharomycetales</taxon>
        <taxon>Saccharomycetaceae</taxon>
        <taxon>Nakaseomyces</taxon>
    </lineage>
</organism>
<comment type="function">
    <text evidence="1">May be involved in telomere capping.</text>
</comment>
<comment type="similarity">
    <text evidence="2">Belongs to the MTC2 family.</text>
</comment>
<reference key="1">
    <citation type="journal article" date="2004" name="Nature">
        <title>Genome evolution in yeasts.</title>
        <authorList>
            <person name="Dujon B."/>
            <person name="Sherman D."/>
            <person name="Fischer G."/>
            <person name="Durrens P."/>
            <person name="Casaregola S."/>
            <person name="Lafontaine I."/>
            <person name="de Montigny J."/>
            <person name="Marck C."/>
            <person name="Neuveglise C."/>
            <person name="Talla E."/>
            <person name="Goffard N."/>
            <person name="Frangeul L."/>
            <person name="Aigle M."/>
            <person name="Anthouard V."/>
            <person name="Babour A."/>
            <person name="Barbe V."/>
            <person name="Barnay S."/>
            <person name="Blanchin S."/>
            <person name="Beckerich J.-M."/>
            <person name="Beyne E."/>
            <person name="Bleykasten C."/>
            <person name="Boisrame A."/>
            <person name="Boyer J."/>
            <person name="Cattolico L."/>
            <person name="Confanioleri F."/>
            <person name="de Daruvar A."/>
            <person name="Despons L."/>
            <person name="Fabre E."/>
            <person name="Fairhead C."/>
            <person name="Ferry-Dumazet H."/>
            <person name="Groppi A."/>
            <person name="Hantraye F."/>
            <person name="Hennequin C."/>
            <person name="Jauniaux N."/>
            <person name="Joyet P."/>
            <person name="Kachouri R."/>
            <person name="Kerrest A."/>
            <person name="Koszul R."/>
            <person name="Lemaire M."/>
            <person name="Lesur I."/>
            <person name="Ma L."/>
            <person name="Muller H."/>
            <person name="Nicaud J.-M."/>
            <person name="Nikolski M."/>
            <person name="Oztas S."/>
            <person name="Ozier-Kalogeropoulos O."/>
            <person name="Pellenz S."/>
            <person name="Potier S."/>
            <person name="Richard G.-F."/>
            <person name="Straub M.-L."/>
            <person name="Suleau A."/>
            <person name="Swennen D."/>
            <person name="Tekaia F."/>
            <person name="Wesolowski-Louvel M."/>
            <person name="Westhof E."/>
            <person name="Wirth B."/>
            <person name="Zeniou-Meyer M."/>
            <person name="Zivanovic Y."/>
            <person name="Bolotin-Fukuhara M."/>
            <person name="Thierry A."/>
            <person name="Bouchier C."/>
            <person name="Caudron B."/>
            <person name="Scarpelli C."/>
            <person name="Gaillardin C."/>
            <person name="Weissenbach J."/>
            <person name="Wincker P."/>
            <person name="Souciet J.-L."/>
        </authorList>
    </citation>
    <scope>NUCLEOTIDE SEQUENCE [LARGE SCALE GENOMIC DNA]</scope>
    <source>
        <strain>ATCC 2001 / BCRC 20586 / JCM 3761 / NBRC 0622 / NRRL Y-65 / CBS 138</strain>
    </source>
</reference>
<name>MTC2_CANGA</name>
<accession>Q6FTZ5</accession>
<keyword id="KW-1185">Reference proteome</keyword>
<dbReference type="EMBL" id="CR380952">
    <property type="protein sequence ID" value="CAG59223.1"/>
    <property type="molecule type" value="Genomic_DNA"/>
</dbReference>
<dbReference type="RefSeq" id="XP_446299.1">
    <property type="nucleotide sequence ID" value="XM_446299.1"/>
</dbReference>
<dbReference type="FunCoup" id="Q6FTZ5">
    <property type="interactions" value="125"/>
</dbReference>
<dbReference type="STRING" id="284593.Q6FTZ5"/>
<dbReference type="EnsemblFungi" id="CAGL0F07623g-T">
    <property type="protein sequence ID" value="CAGL0F07623g-T-p1"/>
    <property type="gene ID" value="CAGL0F07623g"/>
</dbReference>
<dbReference type="KEGG" id="cgr:2887678"/>
<dbReference type="CGD" id="CAL0131288">
    <property type="gene designation" value="CAGL0F07623g"/>
</dbReference>
<dbReference type="VEuPathDB" id="FungiDB:CAGL0F07623g"/>
<dbReference type="eggNOG" id="ENOG502QQMN">
    <property type="taxonomic scope" value="Eukaryota"/>
</dbReference>
<dbReference type="HOGENOM" id="CLU_060779_1_0_1"/>
<dbReference type="InParanoid" id="Q6FTZ5"/>
<dbReference type="Proteomes" id="UP000002428">
    <property type="component" value="Chromosome F"/>
</dbReference>
<protein>
    <recommendedName>
        <fullName>Maintenance of telomere capping protein 2</fullName>
    </recommendedName>
</protein>